<organism>
    <name type="scientific">Helicobacter pylori (strain ATCC 700392 / 26695)</name>
    <name type="common">Campylobacter pylori</name>
    <dbReference type="NCBI Taxonomy" id="85962"/>
    <lineage>
        <taxon>Bacteria</taxon>
        <taxon>Pseudomonadati</taxon>
        <taxon>Campylobacterota</taxon>
        <taxon>Epsilonproteobacteria</taxon>
        <taxon>Campylobacterales</taxon>
        <taxon>Helicobacteraceae</taxon>
        <taxon>Helicobacter</taxon>
    </lineage>
</organism>
<accession>P56071</accession>
<reference key="1">
    <citation type="journal article" date="1997" name="Nature">
        <title>The complete genome sequence of the gastric pathogen Helicobacter pylori.</title>
        <authorList>
            <person name="Tomb J.-F."/>
            <person name="White O."/>
            <person name="Kerlavage A.R."/>
            <person name="Clayton R.A."/>
            <person name="Sutton G.G."/>
            <person name="Fleischmann R.D."/>
            <person name="Ketchum K.A."/>
            <person name="Klenk H.-P."/>
            <person name="Gill S.R."/>
            <person name="Dougherty B.A."/>
            <person name="Nelson K.E."/>
            <person name="Quackenbush J."/>
            <person name="Zhou L."/>
            <person name="Kirkness E.F."/>
            <person name="Peterson S.N."/>
            <person name="Loftus B.J."/>
            <person name="Richardson D.L."/>
            <person name="Dodson R.J."/>
            <person name="Khalak H.G."/>
            <person name="Glodek A."/>
            <person name="McKenney K."/>
            <person name="FitzGerald L.M."/>
            <person name="Lee N."/>
            <person name="Adams M.D."/>
            <person name="Hickey E.K."/>
            <person name="Berg D.E."/>
            <person name="Gocayne J.D."/>
            <person name="Utterback T.R."/>
            <person name="Peterson J.D."/>
            <person name="Kelley J.M."/>
            <person name="Cotton M.D."/>
            <person name="Weidman J.F."/>
            <person name="Fujii C."/>
            <person name="Bowman C."/>
            <person name="Watthey L."/>
            <person name="Wallin E."/>
            <person name="Hayes W.S."/>
            <person name="Borodovsky M."/>
            <person name="Karp P.D."/>
            <person name="Smith H.O."/>
            <person name="Fraser C.M."/>
            <person name="Venter J.C."/>
        </authorList>
    </citation>
    <scope>NUCLEOTIDE SEQUENCE [LARGE SCALE GENOMIC DNA]</scope>
    <source>
        <strain>ATCC 700392 / 26695</strain>
    </source>
</reference>
<protein>
    <recommendedName>
        <fullName evidence="1">Threonine--tRNA ligase</fullName>
        <ecNumber evidence="1">6.1.1.3</ecNumber>
    </recommendedName>
    <alternativeName>
        <fullName evidence="1">Threonyl-tRNA synthetase</fullName>
        <shortName evidence="1">ThrRS</shortName>
    </alternativeName>
</protein>
<evidence type="ECO:0000255" key="1">
    <source>
        <dbReference type="HAMAP-Rule" id="MF_00184"/>
    </source>
</evidence>
<gene>
    <name evidence="1" type="primary">thrS</name>
    <name type="ordered locus">HP_0123</name>
</gene>
<proteinExistence type="inferred from homology"/>
<comment type="function">
    <text evidence="1">Catalyzes the attachment of threonine to tRNA(Thr) in a two-step reaction: L-threonine is first activated by ATP to form Thr-AMP and then transferred to the acceptor end of tRNA(Thr). Also edits incorrectly charged L-seryl-tRNA(Thr).</text>
</comment>
<comment type="catalytic activity">
    <reaction evidence="1">
        <text>tRNA(Thr) + L-threonine + ATP = L-threonyl-tRNA(Thr) + AMP + diphosphate + H(+)</text>
        <dbReference type="Rhea" id="RHEA:24624"/>
        <dbReference type="Rhea" id="RHEA-COMP:9670"/>
        <dbReference type="Rhea" id="RHEA-COMP:9704"/>
        <dbReference type="ChEBI" id="CHEBI:15378"/>
        <dbReference type="ChEBI" id="CHEBI:30616"/>
        <dbReference type="ChEBI" id="CHEBI:33019"/>
        <dbReference type="ChEBI" id="CHEBI:57926"/>
        <dbReference type="ChEBI" id="CHEBI:78442"/>
        <dbReference type="ChEBI" id="CHEBI:78534"/>
        <dbReference type="ChEBI" id="CHEBI:456215"/>
        <dbReference type="EC" id="6.1.1.3"/>
    </reaction>
</comment>
<comment type="cofactor">
    <cofactor evidence="1">
        <name>Zn(2+)</name>
        <dbReference type="ChEBI" id="CHEBI:29105"/>
    </cofactor>
    <text evidence="1">Binds 1 zinc ion per subunit.</text>
</comment>
<comment type="subunit">
    <text evidence="1">Homodimer.</text>
</comment>
<comment type="subcellular location">
    <subcellularLocation>
        <location evidence="1">Cytoplasm</location>
    </subcellularLocation>
</comment>
<comment type="similarity">
    <text evidence="1">Belongs to the class-II aminoacyl-tRNA synthetase family.</text>
</comment>
<name>SYT_HELPY</name>
<keyword id="KW-0030">Aminoacyl-tRNA synthetase</keyword>
<keyword id="KW-0067">ATP-binding</keyword>
<keyword id="KW-0963">Cytoplasm</keyword>
<keyword id="KW-0436">Ligase</keyword>
<keyword id="KW-0479">Metal-binding</keyword>
<keyword id="KW-0547">Nucleotide-binding</keyword>
<keyword id="KW-0648">Protein biosynthesis</keyword>
<keyword id="KW-1185">Reference proteome</keyword>
<keyword id="KW-0694">RNA-binding</keyword>
<keyword id="KW-0820">tRNA-binding</keyword>
<keyword id="KW-0862">Zinc</keyword>
<dbReference type="EC" id="6.1.1.3" evidence="1"/>
<dbReference type="EMBL" id="AE000511">
    <property type="protein sequence ID" value="AAD07192.1"/>
    <property type="molecule type" value="Genomic_DNA"/>
</dbReference>
<dbReference type="PIR" id="C64535">
    <property type="entry name" value="C64535"/>
</dbReference>
<dbReference type="RefSeq" id="NP_206923.1">
    <property type="nucleotide sequence ID" value="NC_000915.1"/>
</dbReference>
<dbReference type="RefSeq" id="WP_001271855.1">
    <property type="nucleotide sequence ID" value="NC_018939.1"/>
</dbReference>
<dbReference type="SMR" id="P56071"/>
<dbReference type="DIP" id="DIP-3171N"/>
<dbReference type="FunCoup" id="P56071">
    <property type="interactions" value="374"/>
</dbReference>
<dbReference type="IntAct" id="P56071">
    <property type="interactions" value="4"/>
</dbReference>
<dbReference type="MINT" id="P56071"/>
<dbReference type="STRING" id="85962.HP_0123"/>
<dbReference type="PaxDb" id="85962-C694_00610"/>
<dbReference type="EnsemblBacteria" id="AAD07192">
    <property type="protein sequence ID" value="AAD07192"/>
    <property type="gene ID" value="HP_0123"/>
</dbReference>
<dbReference type="KEGG" id="heo:C694_00610"/>
<dbReference type="KEGG" id="hpy:HP_0123"/>
<dbReference type="PATRIC" id="fig|85962.47.peg.133"/>
<dbReference type="eggNOG" id="COG0441">
    <property type="taxonomic scope" value="Bacteria"/>
</dbReference>
<dbReference type="InParanoid" id="P56071"/>
<dbReference type="OrthoDB" id="9802304at2"/>
<dbReference type="PhylomeDB" id="P56071"/>
<dbReference type="Proteomes" id="UP000000429">
    <property type="component" value="Chromosome"/>
</dbReference>
<dbReference type="GO" id="GO:0005829">
    <property type="term" value="C:cytosol"/>
    <property type="evidence" value="ECO:0000318"/>
    <property type="project" value="GO_Central"/>
</dbReference>
<dbReference type="GO" id="GO:0005524">
    <property type="term" value="F:ATP binding"/>
    <property type="evidence" value="ECO:0007669"/>
    <property type="project" value="UniProtKB-UniRule"/>
</dbReference>
<dbReference type="GO" id="GO:0046872">
    <property type="term" value="F:metal ion binding"/>
    <property type="evidence" value="ECO:0007669"/>
    <property type="project" value="UniProtKB-KW"/>
</dbReference>
<dbReference type="GO" id="GO:0004829">
    <property type="term" value="F:threonine-tRNA ligase activity"/>
    <property type="evidence" value="ECO:0000318"/>
    <property type="project" value="GO_Central"/>
</dbReference>
<dbReference type="GO" id="GO:0000049">
    <property type="term" value="F:tRNA binding"/>
    <property type="evidence" value="ECO:0007669"/>
    <property type="project" value="UniProtKB-KW"/>
</dbReference>
<dbReference type="GO" id="GO:0006435">
    <property type="term" value="P:threonyl-tRNA aminoacylation"/>
    <property type="evidence" value="ECO:0000318"/>
    <property type="project" value="GO_Central"/>
</dbReference>
<dbReference type="CDD" id="cd00860">
    <property type="entry name" value="ThrRS_anticodon"/>
    <property type="match status" value="1"/>
</dbReference>
<dbReference type="CDD" id="cd00771">
    <property type="entry name" value="ThrRS_core"/>
    <property type="match status" value="1"/>
</dbReference>
<dbReference type="FunFam" id="3.30.930.10:FF:000019">
    <property type="entry name" value="Threonine--tRNA ligase"/>
    <property type="match status" value="1"/>
</dbReference>
<dbReference type="FunFam" id="3.30.980.10:FF:000005">
    <property type="entry name" value="Threonyl-tRNA synthetase, mitochondrial"/>
    <property type="match status" value="1"/>
</dbReference>
<dbReference type="Gene3D" id="3.30.54.20">
    <property type="match status" value="1"/>
</dbReference>
<dbReference type="Gene3D" id="3.40.50.800">
    <property type="entry name" value="Anticodon-binding domain"/>
    <property type="match status" value="1"/>
</dbReference>
<dbReference type="Gene3D" id="3.30.930.10">
    <property type="entry name" value="Bira Bifunctional Protein, Domain 2"/>
    <property type="match status" value="1"/>
</dbReference>
<dbReference type="Gene3D" id="3.30.980.10">
    <property type="entry name" value="Threonyl-trna Synthetase, Chain A, domain 2"/>
    <property type="match status" value="1"/>
</dbReference>
<dbReference type="HAMAP" id="MF_00184">
    <property type="entry name" value="Thr_tRNA_synth"/>
    <property type="match status" value="1"/>
</dbReference>
<dbReference type="InterPro" id="IPR002314">
    <property type="entry name" value="aa-tRNA-synt_IIb"/>
</dbReference>
<dbReference type="InterPro" id="IPR006195">
    <property type="entry name" value="aa-tRNA-synth_II"/>
</dbReference>
<dbReference type="InterPro" id="IPR045864">
    <property type="entry name" value="aa-tRNA-synth_II/BPL/LPL"/>
</dbReference>
<dbReference type="InterPro" id="IPR004154">
    <property type="entry name" value="Anticodon-bd"/>
</dbReference>
<dbReference type="InterPro" id="IPR036621">
    <property type="entry name" value="Anticodon-bd_dom_sf"/>
</dbReference>
<dbReference type="InterPro" id="IPR002320">
    <property type="entry name" value="Thr-tRNA-ligase_IIa"/>
</dbReference>
<dbReference type="InterPro" id="IPR018163">
    <property type="entry name" value="Thr/Ala-tRNA-synth_IIc_edit"/>
</dbReference>
<dbReference type="InterPro" id="IPR047246">
    <property type="entry name" value="ThrRS_anticodon"/>
</dbReference>
<dbReference type="InterPro" id="IPR033728">
    <property type="entry name" value="ThrRS_core"/>
</dbReference>
<dbReference type="InterPro" id="IPR012947">
    <property type="entry name" value="tRNA_SAD"/>
</dbReference>
<dbReference type="NCBIfam" id="TIGR00418">
    <property type="entry name" value="thrS"/>
    <property type="match status" value="1"/>
</dbReference>
<dbReference type="PANTHER" id="PTHR11451:SF44">
    <property type="entry name" value="THREONINE--TRNA LIGASE, CHLOROPLASTIC_MITOCHONDRIAL 2"/>
    <property type="match status" value="1"/>
</dbReference>
<dbReference type="PANTHER" id="PTHR11451">
    <property type="entry name" value="THREONINE-TRNA LIGASE"/>
    <property type="match status" value="1"/>
</dbReference>
<dbReference type="Pfam" id="PF03129">
    <property type="entry name" value="HGTP_anticodon"/>
    <property type="match status" value="1"/>
</dbReference>
<dbReference type="Pfam" id="PF00587">
    <property type="entry name" value="tRNA-synt_2b"/>
    <property type="match status" value="1"/>
</dbReference>
<dbReference type="Pfam" id="PF07973">
    <property type="entry name" value="tRNA_SAD"/>
    <property type="match status" value="1"/>
</dbReference>
<dbReference type="PRINTS" id="PR01047">
    <property type="entry name" value="TRNASYNTHTHR"/>
</dbReference>
<dbReference type="SMART" id="SM00863">
    <property type="entry name" value="tRNA_SAD"/>
    <property type="match status" value="1"/>
</dbReference>
<dbReference type="SUPFAM" id="SSF52954">
    <property type="entry name" value="Class II aaRS ABD-related"/>
    <property type="match status" value="1"/>
</dbReference>
<dbReference type="SUPFAM" id="SSF55681">
    <property type="entry name" value="Class II aaRS and biotin synthetases"/>
    <property type="match status" value="1"/>
</dbReference>
<dbReference type="SUPFAM" id="SSF55186">
    <property type="entry name" value="ThrRS/AlaRS common domain"/>
    <property type="match status" value="1"/>
</dbReference>
<dbReference type="PROSITE" id="PS50862">
    <property type="entry name" value="AA_TRNA_LIGASE_II"/>
    <property type="match status" value="1"/>
</dbReference>
<feature type="chain" id="PRO_0000100989" description="Threonine--tRNA ligase">
    <location>
        <begin position="1"/>
        <end position="612"/>
    </location>
</feature>
<feature type="region of interest" description="Catalytic" evidence="1">
    <location>
        <begin position="218"/>
        <end position="509"/>
    </location>
</feature>
<feature type="binding site" evidence="1">
    <location>
        <position position="310"/>
    </location>
    <ligand>
        <name>Zn(2+)</name>
        <dbReference type="ChEBI" id="CHEBI:29105"/>
    </ligand>
</feature>
<feature type="binding site" evidence="1">
    <location>
        <position position="361"/>
    </location>
    <ligand>
        <name>Zn(2+)</name>
        <dbReference type="ChEBI" id="CHEBI:29105"/>
    </ligand>
</feature>
<feature type="binding site" evidence="1">
    <location>
        <position position="486"/>
    </location>
    <ligand>
        <name>Zn(2+)</name>
        <dbReference type="ChEBI" id="CHEBI:29105"/>
    </ligand>
</feature>
<sequence>MSAELIAVYKDEQIIDLESAKVLGLSDGIKALNGTEPIYFDDSPLALEVIRHSCAHLLAQSLKALYPDAKFFVGPVVEEGFYYDFKTSSKISEEDLPKIEAKMKEFAKLKLAITKETLTREQALERFKGDELKHAVMSKIGGDAFGVYQQGEFEDLCKGPHLPNTRFLNHFKLTKLAGAYLGGDENNEMLIRIYGIAFATKEGLKDYLFQIEEAKKRDHRKLGVELGLFSFDDEIGAGLPLWLPKGARLRKRIEDLLSQALLLRGYEPVKGPEILKSDVWKISGHYDNYKENMYFTTIDEQEYGIKPMNCVGHIKVYQSALHSYRDLPLRFYEYGVVHRHEKSGVLHGLLRVREFTQDDAHIFCSFEQIQSEVSAILDFTHKIMQAFDFSYEMELSTRPAKSIGDDKVWEKATNALKEALKEHRIDYKIDEGGGAFYGPKIDIKITDALKRKWQCGTIQVDMNLPERFKLAFTNEYNHAEQPVMIHRAILGSFERFIAILSEHFGGNFPFFVAPTQIALIPINEEHHVFALKLKEALKKRDIFVEVLDKNDSLNKKVRLAEKQKIPMILVLGNEEVETEILSIRDREKQDQYKMPLKEFLNMVESKMQEVSF</sequence>